<feature type="chain" id="PRO_0000114916" description="Elongin-B">
    <location>
        <begin position="1"/>
        <end position="118"/>
    </location>
</feature>
<feature type="domain" description="Ubiquitin-like" evidence="3">
    <location>
        <begin position="1"/>
        <end position="79"/>
    </location>
</feature>
<feature type="region of interest" description="Disordered" evidence="4">
    <location>
        <begin position="91"/>
        <end position="118"/>
    </location>
</feature>
<feature type="compositionally biased region" description="Polar residues" evidence="4">
    <location>
        <begin position="108"/>
        <end position="118"/>
    </location>
</feature>
<feature type="modified residue" description="N-acetylmethionine" evidence="5">
    <location>
        <position position="1"/>
    </location>
</feature>
<feature type="modified residue" description="Phosphothreonine" evidence="1">
    <location>
        <position position="84"/>
    </location>
</feature>
<feature type="modified residue" description="Phosphoserine" evidence="1">
    <location>
        <position position="108"/>
    </location>
</feature>
<feature type="modified residue" description="Phosphoserine" evidence="1">
    <location>
        <position position="111"/>
    </location>
</feature>
<comment type="function">
    <text evidence="1 2">SIII, also known as elongin, is a general transcription elongation factor that increases the RNA polymerase II transcription elongation past template-encoded arresting sites. Subunit A is transcriptionally active and its transcription activity is strongly enhanced by binding to the dimeric complex of the SIII regulatory subunits B and C (elongin BC complex) (By similarity). In embryonic stem cells, the elongin BC complex is recruited by EPOP to Polycomb group (PcG) target genes in order generate genomic region that display both active and repressive chromatin properties, an important feature of pluripotent stem cells (By similarity).</text>
</comment>
<comment type="function">
    <text evidence="1 2">Core component of multiple cullin-2 and cullin-5-RING E3 ubiquitin-protein ligase complexes (ECS complexes), which mediate the ubiquitination of target proteins. By binding to BC-box motifs it seems to link target recruitment subunits, like VHL and members of the SOCS box family, to Cullin/RBX1 modules that activate E2 ubiquitination enzymes. Component the von Hippel-Lindau ubiquitination complex CBC(VHL). A number of ECS complexes (containing either KLHDC2, KLHDC3, KLHDC10, APPBP2, FEM1A, FEM1B or FEM1C as substrate-recognition component) are part of the DesCEND (destruction via C-end degrons) pathway, which recognizes a C-degron located at the extreme C terminus of target proteins, leading to their ubiquitination and degradation. The ECS(ASB9) complex mediates ubiquitination and degradation of CKB. As part of a multisubunit ubiquitin ligase complex, polyubiquitinates monoubiquitinated POLR2A (By similarity). ECS(LRR1) ubiquitinates MCM7 and promotes CMG replisome disassembly by VCP and chromatin extraction during S-phase (By similarity). As part of the ECS(RAB40C) complex, mediates ANKRD28 ubiquitination and degradation, thereby inhibiting protein phosphatase 6 (PP6) complex activity and focal adhesion assembly during cell migration (By similarity).</text>
</comment>
<comment type="pathway">
    <text evidence="2">Protein modification; protein ubiquitination.</text>
</comment>
<comment type="subunit">
    <text evidence="1 2">Heterotrimer of an A (ELOA, ELOA2 or ELOA3P), ELOB and ELOC subunit (By similarity). The elongin BC complex interacts with EPOP; leading to recruit the elongin BC complex to Polycomb group (PcG) target genes, thereby restricting excessive activity of the PRC2/EED-EZH2 complex (By similarity). Component of multiple cullin-RING E3 ubiquitin-protein ligase complexes composed of Elongin BC (ELOB and ELOC), a cullin (either CUL2 or CUL5), a catalytic subunit (either RBX1 or RNF7/RBX2), as well as a substrate adapter protein that can be either ASB2, ASB9, ASB11, KLHDC2, KLHDC3, KLHDC10, APPBP2, FEM1A, FEM1B, FEM1C, LRR1, PCMTD1, SOCS1, SOCS2, SOCS5, SPSB1, SPSB3, ELOA, VHL, WSB1 or RAB40C. As part of the Elongin BC E3 ubiquitin ligase complex; interacts with NRBP1. May also interact with DCUN1D1, DCUN1D2, DCUN1D3 and DCUN1D5 (By similarity). May form oligomers as a KLHDC2/KLHDC3-ELOB-ELOC complex; this interaction is autoinhibitory for the E3 ligase complex as the substrate-binding site of KLHDC2/KLHDC3 is blocked in the oligomer (By similarity).</text>
</comment>
<comment type="subcellular location">
    <subcellularLocation>
        <location evidence="2">Nucleus</location>
    </subcellularLocation>
</comment>
<comment type="similarity">
    <text evidence="6">Belongs to the Elongin B family.</text>
</comment>
<sequence length="118" mass="13170">MDVFLMIRRHKTTIFTDAKESSTVFELKRIVEGILKRPPEEQRLYKDDQLLDDGKTLGECGFTSQTARPQAPATVGLAFRADDTFEALRIEPFSSPPELPDVMKPQDSGGSANEQAVQ</sequence>
<evidence type="ECO:0000250" key="1">
    <source>
        <dbReference type="UniProtKB" id="P62869"/>
    </source>
</evidence>
<evidence type="ECO:0000250" key="2">
    <source>
        <dbReference type="UniProtKB" id="Q15370"/>
    </source>
</evidence>
<evidence type="ECO:0000255" key="3">
    <source>
        <dbReference type="PROSITE-ProRule" id="PRU00214"/>
    </source>
</evidence>
<evidence type="ECO:0000256" key="4">
    <source>
        <dbReference type="SAM" id="MobiDB-lite"/>
    </source>
</evidence>
<evidence type="ECO:0000269" key="5">
    <source ref="3"/>
</evidence>
<evidence type="ECO:0000305" key="6"/>
<gene>
    <name type="primary">Elob</name>
    <name type="synonym">Tceb2</name>
</gene>
<reference key="1">
    <citation type="journal article" date="1995" name="Proc. Natl. Acad. Sci. U.S.A.">
        <title>Positive regulation of general transcription factor SIII by a tailed ubiquitin homolog.</title>
        <authorList>
            <person name="Garrett K.P."/>
            <person name="Aso T."/>
            <person name="Bradsher J.N."/>
            <person name="Foundling S.I."/>
            <person name="Lane W.S."/>
            <person name="Conaway R.C."/>
            <person name="Conaway J.W."/>
        </authorList>
    </citation>
    <scope>NUCLEOTIDE SEQUENCE [MRNA]</scope>
    <scope>FUNCTION</scope>
    <source>
        <strain>Sprague-Dawley</strain>
        <tissue>Brain</tissue>
        <tissue>Liver</tissue>
    </source>
</reference>
<reference key="2">
    <citation type="journal article" date="2004" name="Genome Res.">
        <title>The status, quality, and expansion of the NIH full-length cDNA project: the Mammalian Gene Collection (MGC).</title>
        <authorList>
            <consortium name="The MGC Project Team"/>
        </authorList>
    </citation>
    <scope>NUCLEOTIDE SEQUENCE [LARGE SCALE MRNA]</scope>
    <source>
        <tissue>Pituitary</tissue>
    </source>
</reference>
<reference key="3">
    <citation type="submission" date="2006-08" db="UniProtKB">
        <authorList>
            <person name="Bienvenut W.V."/>
            <person name="von Kriegsheim A.F."/>
            <person name="Kolch W."/>
        </authorList>
    </citation>
    <scope>PROTEIN SEQUENCE OF 1-8; 12-28; 44-55 AND 69-89</scope>
    <scope>ACETYLATION AT MET-1</scope>
    <scope>IDENTIFICATION BY MASS SPECTROMETRY</scope>
    <source>
        <tissue>Pheochromocytoma</tissue>
    </source>
</reference>
<reference key="4">
    <citation type="journal article" date="1993" name="J. Biol. Chem.">
        <title>RNA polymerase II transcription factor SIII. I. Identification, purification, and properties.</title>
        <authorList>
            <person name="Bradsher J.N."/>
            <person name="Jackson K.W."/>
            <person name="Conaway R.C."/>
            <person name="Conaway J.W."/>
        </authorList>
    </citation>
    <scope>FUNCTION</scope>
    <scope>SUBUNIT</scope>
</reference>
<dbReference type="EMBL" id="L42855">
    <property type="protein sequence ID" value="AAA80968.1"/>
    <property type="molecule type" value="mRNA"/>
</dbReference>
<dbReference type="EMBL" id="BC058463">
    <property type="protein sequence ID" value="AAH58463.1"/>
    <property type="molecule type" value="mRNA"/>
</dbReference>
<dbReference type="RefSeq" id="NP_112391.1">
    <property type="nucleotide sequence ID" value="NM_031129.3"/>
</dbReference>
<dbReference type="BMRB" id="P62870"/>
<dbReference type="SMR" id="P62870"/>
<dbReference type="BioGRID" id="249665">
    <property type="interactions" value="8"/>
</dbReference>
<dbReference type="CORUM" id="P62870"/>
<dbReference type="FunCoup" id="P62870">
    <property type="interactions" value="2771"/>
</dbReference>
<dbReference type="IntAct" id="P62870">
    <property type="interactions" value="7"/>
</dbReference>
<dbReference type="MINT" id="P62870"/>
<dbReference type="STRING" id="10116.ENSRNOP00000072621"/>
<dbReference type="iPTMnet" id="P62870"/>
<dbReference type="PhosphoSitePlus" id="P62870"/>
<dbReference type="SwissPalm" id="P62870"/>
<dbReference type="jPOST" id="P62870"/>
<dbReference type="PaxDb" id="10116-ENSRNOP00000006892"/>
<dbReference type="GeneID" id="81807"/>
<dbReference type="KEGG" id="rno:81807"/>
<dbReference type="UCSC" id="RGD:621200">
    <property type="organism name" value="rat"/>
</dbReference>
<dbReference type="AGR" id="RGD:621200"/>
<dbReference type="CTD" id="6923"/>
<dbReference type="RGD" id="621200">
    <property type="gene designation" value="Elob"/>
</dbReference>
<dbReference type="VEuPathDB" id="HostDB:ENSRNOG00000004814"/>
<dbReference type="eggNOG" id="KOG4495">
    <property type="taxonomic scope" value="Eukaryota"/>
</dbReference>
<dbReference type="HOGENOM" id="CLU_139243_0_0_1"/>
<dbReference type="InParanoid" id="P62870"/>
<dbReference type="OrthoDB" id="7537057at2759"/>
<dbReference type="PhylomeDB" id="P62870"/>
<dbReference type="Reactome" id="R-RNO-112382">
    <property type="pathway name" value="Formation of RNA Pol II elongation complex"/>
</dbReference>
<dbReference type="Reactome" id="R-RNO-1234176">
    <property type="pathway name" value="Oxygen-dependent proline hydroxylation of Hypoxia-inducible Factor Alpha"/>
</dbReference>
<dbReference type="Reactome" id="R-RNO-674695">
    <property type="pathway name" value="RNA Polymerase II Pre-transcription Events"/>
</dbReference>
<dbReference type="Reactome" id="R-RNO-6796648">
    <property type="pathway name" value="TP53 Regulates Transcription of DNA Repair Genes"/>
</dbReference>
<dbReference type="Reactome" id="R-RNO-75955">
    <property type="pathway name" value="RNA Polymerase II Transcription Elongation"/>
</dbReference>
<dbReference type="Reactome" id="R-RNO-8951664">
    <property type="pathway name" value="Neddylation"/>
</dbReference>
<dbReference type="Reactome" id="R-RNO-9705462">
    <property type="pathway name" value="Inactivation of CSF3 (G-CSF) signaling"/>
</dbReference>
<dbReference type="Reactome" id="R-RNO-983168">
    <property type="pathway name" value="Antigen processing: Ubiquitination &amp; Proteasome degradation"/>
</dbReference>
<dbReference type="UniPathway" id="UPA00143"/>
<dbReference type="PRO" id="PR:P62870"/>
<dbReference type="Proteomes" id="UP000002494">
    <property type="component" value="Chromosome 10"/>
</dbReference>
<dbReference type="Bgee" id="ENSRNOG00000004814">
    <property type="expression patterns" value="Expressed in testis and 20 other cell types or tissues"/>
</dbReference>
<dbReference type="ExpressionAtlas" id="P62870">
    <property type="expression patterns" value="baseline and differential"/>
</dbReference>
<dbReference type="GO" id="GO:0031462">
    <property type="term" value="C:Cul2-RING ubiquitin ligase complex"/>
    <property type="evidence" value="ECO:0000266"/>
    <property type="project" value="RGD"/>
</dbReference>
<dbReference type="GO" id="GO:0031466">
    <property type="term" value="C:Cul5-RING ubiquitin ligase complex"/>
    <property type="evidence" value="ECO:0000266"/>
    <property type="project" value="RGD"/>
</dbReference>
<dbReference type="GO" id="GO:0070449">
    <property type="term" value="C:elongin complex"/>
    <property type="evidence" value="ECO:0000266"/>
    <property type="project" value="RGD"/>
</dbReference>
<dbReference type="GO" id="GO:0005667">
    <property type="term" value="C:transcription regulator complex"/>
    <property type="evidence" value="ECO:0000314"/>
    <property type="project" value="RGD"/>
</dbReference>
<dbReference type="GO" id="GO:0030891">
    <property type="term" value="C:VCB complex"/>
    <property type="evidence" value="ECO:0000314"/>
    <property type="project" value="RGD"/>
</dbReference>
<dbReference type="GO" id="GO:0044877">
    <property type="term" value="F:protein-containing complex binding"/>
    <property type="evidence" value="ECO:0000353"/>
    <property type="project" value="RGD"/>
</dbReference>
<dbReference type="GO" id="GO:0003713">
    <property type="term" value="F:transcription coactivator activity"/>
    <property type="evidence" value="ECO:0000314"/>
    <property type="project" value="RGD"/>
</dbReference>
<dbReference type="GO" id="GO:0001222">
    <property type="term" value="F:transcription corepressor binding"/>
    <property type="evidence" value="ECO:0000266"/>
    <property type="project" value="RGD"/>
</dbReference>
<dbReference type="GO" id="GO:0031625">
    <property type="term" value="F:ubiquitin protein ligase binding"/>
    <property type="evidence" value="ECO:0000266"/>
    <property type="project" value="RGD"/>
</dbReference>
<dbReference type="GO" id="GO:0045944">
    <property type="term" value="P:positive regulation of transcription by RNA polymerase II"/>
    <property type="evidence" value="ECO:0000314"/>
    <property type="project" value="RGD"/>
</dbReference>
<dbReference type="GO" id="GO:0016567">
    <property type="term" value="P:protein ubiquitination"/>
    <property type="evidence" value="ECO:0007669"/>
    <property type="project" value="UniProtKB-UniPathway"/>
</dbReference>
<dbReference type="GO" id="GO:0140958">
    <property type="term" value="P:target-directed miRNA degradation"/>
    <property type="evidence" value="ECO:0000266"/>
    <property type="project" value="RGD"/>
</dbReference>
<dbReference type="GO" id="GO:0006368">
    <property type="term" value="P:transcription elongation by RNA polymerase II"/>
    <property type="evidence" value="ECO:0007669"/>
    <property type="project" value="InterPro"/>
</dbReference>
<dbReference type="GO" id="GO:0006367">
    <property type="term" value="P:transcription initiation at RNA polymerase II promoter"/>
    <property type="evidence" value="ECO:0000266"/>
    <property type="project" value="RGD"/>
</dbReference>
<dbReference type="CDD" id="cd01788">
    <property type="entry name" value="Ubl_ElonginB"/>
    <property type="match status" value="1"/>
</dbReference>
<dbReference type="FunFam" id="3.10.20.90:FF:000108">
    <property type="entry name" value="Elongin-B"/>
    <property type="match status" value="1"/>
</dbReference>
<dbReference type="Gene3D" id="3.10.20.90">
    <property type="entry name" value="Phosphatidylinositol 3-kinase Catalytic Subunit, Chain A, domain 1"/>
    <property type="match status" value="1"/>
</dbReference>
<dbReference type="InterPro" id="IPR039049">
    <property type="entry name" value="ELOB"/>
</dbReference>
<dbReference type="InterPro" id="IPR000626">
    <property type="entry name" value="Ubiquitin-like_dom"/>
</dbReference>
<dbReference type="InterPro" id="IPR029071">
    <property type="entry name" value="Ubiquitin-like_domsf"/>
</dbReference>
<dbReference type="PANTHER" id="PTHR13248:SF2">
    <property type="entry name" value="ELONGIN-B"/>
    <property type="match status" value="1"/>
</dbReference>
<dbReference type="PANTHER" id="PTHR13248">
    <property type="entry name" value="TRANSCRIPTION ELONGATION FACTOR B POLYPEPTIDE 2"/>
    <property type="match status" value="1"/>
</dbReference>
<dbReference type="Pfam" id="PF00240">
    <property type="entry name" value="ubiquitin"/>
    <property type="match status" value="1"/>
</dbReference>
<dbReference type="SMART" id="SM00213">
    <property type="entry name" value="UBQ"/>
    <property type="match status" value="1"/>
</dbReference>
<dbReference type="SUPFAM" id="SSF54236">
    <property type="entry name" value="Ubiquitin-like"/>
    <property type="match status" value="1"/>
</dbReference>
<dbReference type="PROSITE" id="PS50053">
    <property type="entry name" value="UBIQUITIN_2"/>
    <property type="match status" value="1"/>
</dbReference>
<organism>
    <name type="scientific">Rattus norvegicus</name>
    <name type="common">Rat</name>
    <dbReference type="NCBI Taxonomy" id="10116"/>
    <lineage>
        <taxon>Eukaryota</taxon>
        <taxon>Metazoa</taxon>
        <taxon>Chordata</taxon>
        <taxon>Craniata</taxon>
        <taxon>Vertebrata</taxon>
        <taxon>Euteleostomi</taxon>
        <taxon>Mammalia</taxon>
        <taxon>Eutheria</taxon>
        <taxon>Euarchontoglires</taxon>
        <taxon>Glires</taxon>
        <taxon>Rodentia</taxon>
        <taxon>Myomorpha</taxon>
        <taxon>Muroidea</taxon>
        <taxon>Muridae</taxon>
        <taxon>Murinae</taxon>
        <taxon>Rattus</taxon>
    </lineage>
</organism>
<accession>P62870</accession>
<accession>Q63529</accession>
<accession>Q80W20</accession>
<protein>
    <recommendedName>
        <fullName>Elongin-B</fullName>
        <shortName>EloB</shortName>
    </recommendedName>
    <alternativeName>
        <fullName>Elongin 18 kDa subunit</fullName>
    </alternativeName>
    <alternativeName>
        <fullName>RNA polymerase II transcription factor SIII subunit B</fullName>
    </alternativeName>
    <alternativeName>
        <fullName>SIII p18</fullName>
    </alternativeName>
    <alternativeName>
        <fullName>Transcription elongation factor B polypeptide 2</fullName>
    </alternativeName>
</protein>
<keyword id="KW-0007">Acetylation</keyword>
<keyword id="KW-0903">Direct protein sequencing</keyword>
<keyword id="KW-0539">Nucleus</keyword>
<keyword id="KW-0597">Phosphoprotein</keyword>
<keyword id="KW-1185">Reference proteome</keyword>
<keyword id="KW-0804">Transcription</keyword>
<keyword id="KW-0805">Transcription regulation</keyword>
<keyword id="KW-0833">Ubl conjugation pathway</keyword>
<proteinExistence type="evidence at protein level"/>
<name>ELOB_RAT</name>